<reference key="1">
    <citation type="journal article" date="2009" name="Appl. Environ. Microbiol.">
        <title>Metabolic versatility and indigenous origin of the archaeon Thermococcus sibiricus, isolated from a siberian oil reservoir, as revealed by genome analysis.</title>
        <authorList>
            <person name="Mardanov A.V."/>
            <person name="Ravin N.V."/>
            <person name="Svetlitchnyi V.A."/>
            <person name="Beletsky A.V."/>
            <person name="Miroshnichenko M.L."/>
            <person name="Bonch-Osmolovskaya E.A."/>
            <person name="Skryabin K.G."/>
        </authorList>
    </citation>
    <scope>NUCLEOTIDE SEQUENCE [LARGE SCALE GENOMIC DNA]</scope>
    <source>
        <strain>DSM 12597 / MM 739</strain>
    </source>
</reference>
<gene>
    <name evidence="1" type="primary">pcm</name>
    <name type="ordered locus">TSIB_1093</name>
</gene>
<comment type="function">
    <text evidence="1">Catalyzes the methyl esterification of L-isoaspartyl residues in peptides and proteins that result from spontaneous decomposition of normal L-aspartyl and L-asparaginyl residues. It plays a role in the repair and/or degradation of damaged proteins.</text>
</comment>
<comment type="catalytic activity">
    <reaction evidence="1">
        <text>[protein]-L-isoaspartate + S-adenosyl-L-methionine = [protein]-L-isoaspartate alpha-methyl ester + S-adenosyl-L-homocysteine</text>
        <dbReference type="Rhea" id="RHEA:12705"/>
        <dbReference type="Rhea" id="RHEA-COMP:12143"/>
        <dbReference type="Rhea" id="RHEA-COMP:12144"/>
        <dbReference type="ChEBI" id="CHEBI:57856"/>
        <dbReference type="ChEBI" id="CHEBI:59789"/>
        <dbReference type="ChEBI" id="CHEBI:90596"/>
        <dbReference type="ChEBI" id="CHEBI:90598"/>
        <dbReference type="EC" id="2.1.1.77"/>
    </reaction>
</comment>
<comment type="subcellular location">
    <subcellularLocation>
        <location evidence="1">Cytoplasm</location>
    </subcellularLocation>
</comment>
<comment type="similarity">
    <text evidence="1">Belongs to the methyltransferase superfamily. L-isoaspartyl/D-aspartyl protein methyltransferase family.</text>
</comment>
<dbReference type="EC" id="2.1.1.77" evidence="1"/>
<dbReference type="EMBL" id="CP001463">
    <property type="protein sequence ID" value="ACS90147.1"/>
    <property type="molecule type" value="Genomic_DNA"/>
</dbReference>
<dbReference type="RefSeq" id="WP_015849366.1">
    <property type="nucleotide sequence ID" value="NC_012883.1"/>
</dbReference>
<dbReference type="SMR" id="C6A3F2"/>
<dbReference type="STRING" id="604354.TSIB_1093"/>
<dbReference type="GeneID" id="8096090"/>
<dbReference type="KEGG" id="tsi:TSIB_1093"/>
<dbReference type="eggNOG" id="arCOG00976">
    <property type="taxonomic scope" value="Archaea"/>
</dbReference>
<dbReference type="HOGENOM" id="CLU_055432_2_0_2"/>
<dbReference type="OrthoDB" id="33618at2157"/>
<dbReference type="Proteomes" id="UP000009079">
    <property type="component" value="Chromosome"/>
</dbReference>
<dbReference type="GO" id="GO:0005737">
    <property type="term" value="C:cytoplasm"/>
    <property type="evidence" value="ECO:0007669"/>
    <property type="project" value="UniProtKB-SubCell"/>
</dbReference>
<dbReference type="GO" id="GO:0004719">
    <property type="term" value="F:protein-L-isoaspartate (D-aspartate) O-methyltransferase activity"/>
    <property type="evidence" value="ECO:0007669"/>
    <property type="project" value="UniProtKB-UniRule"/>
</dbReference>
<dbReference type="GO" id="GO:0032259">
    <property type="term" value="P:methylation"/>
    <property type="evidence" value="ECO:0007669"/>
    <property type="project" value="UniProtKB-KW"/>
</dbReference>
<dbReference type="GO" id="GO:0036211">
    <property type="term" value="P:protein modification process"/>
    <property type="evidence" value="ECO:0007669"/>
    <property type="project" value="UniProtKB-UniRule"/>
</dbReference>
<dbReference type="GO" id="GO:0030091">
    <property type="term" value="P:protein repair"/>
    <property type="evidence" value="ECO:0007669"/>
    <property type="project" value="UniProtKB-UniRule"/>
</dbReference>
<dbReference type="CDD" id="cd02440">
    <property type="entry name" value="AdoMet_MTases"/>
    <property type="match status" value="1"/>
</dbReference>
<dbReference type="FunFam" id="3.40.50.150:FF:000010">
    <property type="entry name" value="Protein-L-isoaspartate O-methyltransferase"/>
    <property type="match status" value="1"/>
</dbReference>
<dbReference type="Gene3D" id="3.40.50.150">
    <property type="entry name" value="Vaccinia Virus protein VP39"/>
    <property type="match status" value="1"/>
</dbReference>
<dbReference type="HAMAP" id="MF_00090">
    <property type="entry name" value="PIMT"/>
    <property type="match status" value="1"/>
</dbReference>
<dbReference type="InterPro" id="IPR000682">
    <property type="entry name" value="PCMT"/>
</dbReference>
<dbReference type="InterPro" id="IPR029063">
    <property type="entry name" value="SAM-dependent_MTases_sf"/>
</dbReference>
<dbReference type="NCBIfam" id="TIGR00080">
    <property type="entry name" value="pimt"/>
    <property type="match status" value="1"/>
</dbReference>
<dbReference type="NCBIfam" id="NF001453">
    <property type="entry name" value="PRK00312.1"/>
    <property type="match status" value="1"/>
</dbReference>
<dbReference type="PANTHER" id="PTHR11579">
    <property type="entry name" value="PROTEIN-L-ISOASPARTATE O-METHYLTRANSFERASE"/>
    <property type="match status" value="1"/>
</dbReference>
<dbReference type="PANTHER" id="PTHR11579:SF0">
    <property type="entry name" value="PROTEIN-L-ISOASPARTATE(D-ASPARTATE) O-METHYLTRANSFERASE"/>
    <property type="match status" value="1"/>
</dbReference>
<dbReference type="Pfam" id="PF01135">
    <property type="entry name" value="PCMT"/>
    <property type="match status" value="1"/>
</dbReference>
<dbReference type="SUPFAM" id="SSF53335">
    <property type="entry name" value="S-adenosyl-L-methionine-dependent methyltransferases"/>
    <property type="match status" value="1"/>
</dbReference>
<dbReference type="PROSITE" id="PS01279">
    <property type="entry name" value="PCMT"/>
    <property type="match status" value="1"/>
</dbReference>
<sequence length="221" mass="25058">MDESDLYRKWMRLVENLEREGIIKSEKVKRAFLRVPRYKFVSDRYKEYAHVDEPLPIPAGQTISAPHMVAIMLELAELEGGMNVLEVGAGSGWNAALIYELVKREVYTIERVSDLVEFARKNLERAGYKDKVHVIWGDGSKGYPPNAPYDRIIVTAGAPKVPEPLIEQLKVGGKLLIPVGSYHLWQELLEVIKLDEDNNTKIKNHGGVAFVPLIGEHGWRE</sequence>
<proteinExistence type="inferred from homology"/>
<protein>
    <recommendedName>
        <fullName evidence="1">Protein-L-isoaspartate O-methyltransferase</fullName>
        <ecNumber evidence="1">2.1.1.77</ecNumber>
    </recommendedName>
    <alternativeName>
        <fullName evidence="1">L-isoaspartyl protein carboxyl methyltransferase</fullName>
    </alternativeName>
    <alternativeName>
        <fullName evidence="1">Protein L-isoaspartyl methyltransferase</fullName>
    </alternativeName>
    <alternativeName>
        <fullName evidence="1">Protein-beta-aspartate methyltransferase</fullName>
        <shortName evidence="1">PIMT</shortName>
    </alternativeName>
</protein>
<accession>C6A3F2</accession>
<evidence type="ECO:0000255" key="1">
    <source>
        <dbReference type="HAMAP-Rule" id="MF_00090"/>
    </source>
</evidence>
<keyword id="KW-0963">Cytoplasm</keyword>
<keyword id="KW-0489">Methyltransferase</keyword>
<keyword id="KW-1185">Reference proteome</keyword>
<keyword id="KW-0949">S-adenosyl-L-methionine</keyword>
<keyword id="KW-0808">Transferase</keyword>
<name>PIMT_THESM</name>
<feature type="chain" id="PRO_1000202665" description="Protein-L-isoaspartate O-methyltransferase">
    <location>
        <begin position="1"/>
        <end position="221"/>
    </location>
</feature>
<feature type="active site" evidence="1">
    <location>
        <position position="64"/>
    </location>
</feature>
<organism>
    <name type="scientific">Thermococcus sibiricus (strain DSM 12597 / MM 739)</name>
    <dbReference type="NCBI Taxonomy" id="604354"/>
    <lineage>
        <taxon>Archaea</taxon>
        <taxon>Methanobacteriati</taxon>
        <taxon>Methanobacteriota</taxon>
        <taxon>Thermococci</taxon>
        <taxon>Thermococcales</taxon>
        <taxon>Thermococcaceae</taxon>
        <taxon>Thermococcus</taxon>
    </lineage>
</organism>